<dbReference type="EC" id="4.4.-.-" evidence="6"/>
<dbReference type="EMBL" id="CH476594">
    <property type="protein sequence ID" value="EAU38782.1"/>
    <property type="molecule type" value="Genomic_DNA"/>
</dbReference>
<dbReference type="RefSeq" id="XP_001210222.1">
    <property type="nucleotide sequence ID" value="XM_001210222.1"/>
</dbReference>
<dbReference type="STRING" id="341663.Q0D1P8"/>
<dbReference type="GlyCosmos" id="Q0D1P8">
    <property type="glycosylation" value="3 sites, No reported glycans"/>
</dbReference>
<dbReference type="EnsemblFungi" id="EAU38782">
    <property type="protein sequence ID" value="EAU38782"/>
    <property type="gene ID" value="ATEG_00136"/>
</dbReference>
<dbReference type="GeneID" id="4354893"/>
<dbReference type="VEuPathDB" id="FungiDB:ATEG_00136"/>
<dbReference type="HOGENOM" id="CLU_1383886_0_0_1"/>
<dbReference type="OMA" id="HYAVHHT"/>
<dbReference type="OrthoDB" id="5392122at2759"/>
<dbReference type="Proteomes" id="UP000007963">
    <property type="component" value="Unassembled WGS sequence"/>
</dbReference>
<dbReference type="GO" id="GO:0016829">
    <property type="term" value="F:lyase activity"/>
    <property type="evidence" value="ECO:0007669"/>
    <property type="project" value="UniProtKB-KW"/>
</dbReference>
<dbReference type="GO" id="GO:0046872">
    <property type="term" value="F:metal ion binding"/>
    <property type="evidence" value="ECO:0007669"/>
    <property type="project" value="UniProtKB-KW"/>
</dbReference>
<dbReference type="Gene3D" id="3.10.180.10">
    <property type="entry name" value="2,3-Dihydroxybiphenyl 1,2-Dioxygenase, domain 1"/>
    <property type="match status" value="1"/>
</dbReference>
<dbReference type="InterPro" id="IPR029068">
    <property type="entry name" value="Glyas_Bleomycin-R_OHBP_Dase"/>
</dbReference>
<dbReference type="InterPro" id="IPR004360">
    <property type="entry name" value="Glyas_Fos-R_dOase_dom"/>
</dbReference>
<dbReference type="InterPro" id="IPR037523">
    <property type="entry name" value="VOC"/>
</dbReference>
<dbReference type="Pfam" id="PF00903">
    <property type="entry name" value="Glyoxalase"/>
    <property type="match status" value="1"/>
</dbReference>
<dbReference type="SUPFAM" id="SSF54593">
    <property type="entry name" value="Glyoxalase/Bleomycin resistance protein/Dihydroxybiphenyl dioxygenase"/>
    <property type="match status" value="1"/>
</dbReference>
<dbReference type="PROSITE" id="PS51819">
    <property type="entry name" value="VOC"/>
    <property type="match status" value="1"/>
</dbReference>
<organism>
    <name type="scientific">Aspergillus terreus (strain NIH 2624 / FGSC A1156)</name>
    <dbReference type="NCBI Taxonomy" id="341663"/>
    <lineage>
        <taxon>Eukaryota</taxon>
        <taxon>Fungi</taxon>
        <taxon>Dikarya</taxon>
        <taxon>Ascomycota</taxon>
        <taxon>Pezizomycotina</taxon>
        <taxon>Eurotiomycetes</taxon>
        <taxon>Eurotiomycetidae</taxon>
        <taxon>Eurotiales</taxon>
        <taxon>Aspergillaceae</taxon>
        <taxon>Aspergillus</taxon>
        <taxon>Aspergillus subgen. Circumdati</taxon>
    </lineage>
</organism>
<name>TERI_ASPTN</name>
<reference key="1">
    <citation type="submission" date="2005-09" db="EMBL/GenBank/DDBJ databases">
        <title>Annotation of the Aspergillus terreus NIH2624 genome.</title>
        <authorList>
            <person name="Birren B.W."/>
            <person name="Lander E.S."/>
            <person name="Galagan J.E."/>
            <person name="Nusbaum C."/>
            <person name="Devon K."/>
            <person name="Henn M."/>
            <person name="Ma L.-J."/>
            <person name="Jaffe D.B."/>
            <person name="Butler J."/>
            <person name="Alvarez P."/>
            <person name="Gnerre S."/>
            <person name="Grabherr M."/>
            <person name="Kleber M."/>
            <person name="Mauceli E.W."/>
            <person name="Brockman W."/>
            <person name="Rounsley S."/>
            <person name="Young S.K."/>
            <person name="LaButti K."/>
            <person name="Pushparaj V."/>
            <person name="DeCaprio D."/>
            <person name="Crawford M."/>
            <person name="Koehrsen M."/>
            <person name="Engels R."/>
            <person name="Montgomery P."/>
            <person name="Pearson M."/>
            <person name="Howarth C."/>
            <person name="Larson L."/>
            <person name="Luoma S."/>
            <person name="White J."/>
            <person name="Alvarado L."/>
            <person name="Kodira C.D."/>
            <person name="Zeng Q."/>
            <person name="Oleary S."/>
            <person name="Yandava C."/>
            <person name="Denning D.W."/>
            <person name="Nierman W.C."/>
            <person name="Milne T."/>
            <person name="Madden K."/>
        </authorList>
    </citation>
    <scope>NUCLEOTIDE SEQUENCE [LARGE SCALE GENOMIC DNA]</scope>
    <source>
        <strain>NIH 2624 / FGSC A1156</strain>
    </source>
</reference>
<reference key="2">
    <citation type="journal article" date="2014" name="Chem. Biol.">
        <title>Terrein biosynthesis in Aspergillus terreus and its impact on phytotoxicity.</title>
        <authorList>
            <person name="Zaehle C."/>
            <person name="Gressler M."/>
            <person name="Shelest E."/>
            <person name="Geib E."/>
            <person name="Hertweck C."/>
            <person name="Brock M."/>
        </authorList>
    </citation>
    <scope>FUNCTION</scope>
    <scope>DISRUPTION PHENOTYPE</scope>
</reference>
<reference key="3">
    <citation type="journal article" date="2015" name="Front. Microbiol.">
        <title>A new high-performance heterologous fungal expression system based on regulatory elements from the Aspergillus terreus terrein gene cluster.</title>
        <authorList>
            <person name="Gressler M."/>
            <person name="Hortschansky P."/>
            <person name="Geib E."/>
            <person name="Brock M."/>
        </authorList>
    </citation>
    <scope>INDUCTION</scope>
</reference>
<gene>
    <name evidence="5" type="primary">terI</name>
    <name type="ORF">ATEG_00136</name>
</gene>
<sequence>MARFAVLQLLLPLAAGLTGASFPAQIPTILEEPDTPHYAVHHTVVSASSLSESLKFYVDGLGLDIIRNYNFQGDLTTLFGTNTSVLPGYFLGDTTSVYNGTDGVIYLVEFPDAKKIPTDESDPPNTGLFLTSFWMGDKLNATLDRLDRLGMGGKPHIATFSFGSEPLATYATVRDPDGARVLLVSRPYINSIGKQRP</sequence>
<feature type="signal peptide" evidence="1">
    <location>
        <begin position="1"/>
        <end position="19"/>
    </location>
</feature>
<feature type="chain" id="PRO_5004170688" description="Lactoylglutathione lyase-like protein terB">
    <location>
        <begin position="20"/>
        <end position="197"/>
    </location>
</feature>
<feature type="glycosylation site" description="N-linked (GlcNAc...) asparagine" evidence="2">
    <location>
        <position position="82"/>
    </location>
</feature>
<feature type="glycosylation site" description="N-linked (GlcNAc...) asparagine" evidence="2">
    <location>
        <position position="99"/>
    </location>
</feature>
<feature type="glycosylation site" description="N-linked (GlcNAc...) asparagine" evidence="2">
    <location>
        <position position="140"/>
    </location>
</feature>
<comment type="function">
    <text evidence="3">Lactoylglutathione lyase-like protein; part of the gene cluster that mediates the biosynthesis of terrein, a fungal metabolite with ecological, antimicrobial, antiproliferative, and antioxidative activities (PubMed:24816227). The first step in the pathway is performed by the polyketide synthase terA that produces 4-hydroxy-6-methylpyranon (4-HMP), orsellinic acid (OA), and 2,3-dehydro-6-hydroxymellein (2,3-dehydro-6-HM) by condensing acetyl-CoA with two, three, or four malonyl-CoA units, respectively (PubMed:24816227). 4-HMP and OA are not pathway intermediates, but are rather shunt or side products (PubMed:24816227). 2,3-dehydro-6-HM is further converted to 6-hydroxymellein (6-HM) by the 6-hydroxymellein synthase terB (PubMed:24816227). The monooxygenases terC and terD, the multicopper oxidase terE and the Kelch-like protein terF are then involved in the transformation of 6-HM to terrein (PubMed:24816227). Even if they are co-regulated with the other terrein cluster genes, terH and terI seem to be dispensable for terrein production; whereas one or both of the 2 transporters terG and terJ are probably required for efficient secretion of metabolites (PubMed:24816227).</text>
</comment>
<comment type="induction">
    <text evidence="4">Expression is under the control of the terrein cluster-specific transcription factor terR (PubMed:25852654).</text>
</comment>
<comment type="disruption phenotype">
    <text evidence="3">Reduces, but does not abolish, the production of terrein (PubMed:24816227).</text>
</comment>
<comment type="similarity">
    <text evidence="6">Belongs to the glyoxalase I family.</text>
</comment>
<keyword id="KW-0325">Glycoprotein</keyword>
<keyword id="KW-0456">Lyase</keyword>
<keyword id="KW-0479">Metal-binding</keyword>
<keyword id="KW-1185">Reference proteome</keyword>
<keyword id="KW-0732">Signal</keyword>
<protein>
    <recommendedName>
        <fullName evidence="6">Lactoylglutathione lyase-like protein terB</fullName>
        <ecNumber evidence="6">4.4.-.-</ecNumber>
    </recommendedName>
    <alternativeName>
        <fullName evidence="5">Terrein biosynthesis cluster protein terB</fullName>
    </alternativeName>
</protein>
<accession>Q0D1P8</accession>
<evidence type="ECO:0000255" key="1"/>
<evidence type="ECO:0000255" key="2">
    <source>
        <dbReference type="PROSITE-ProRule" id="PRU00498"/>
    </source>
</evidence>
<evidence type="ECO:0000269" key="3">
    <source>
    </source>
</evidence>
<evidence type="ECO:0000269" key="4">
    <source>
    </source>
</evidence>
<evidence type="ECO:0000303" key="5">
    <source>
    </source>
</evidence>
<evidence type="ECO:0000305" key="6"/>
<proteinExistence type="evidence at transcript level"/>